<protein>
    <recommendedName>
        <fullName evidence="2">tRNA (guanine-N(7)-)-methyltransferase</fullName>
        <ecNumber evidence="2">2.1.1.33</ecNumber>
    </recommendedName>
    <alternativeName>
        <fullName evidence="2">tRNA (guanine(46)-N(7))-methyltransferase</fullName>
    </alternativeName>
    <alternativeName>
        <fullName evidence="2">tRNA(m7G46)-methyltransferase</fullName>
    </alternativeName>
</protein>
<accession>A6WWW9</accession>
<comment type="function">
    <text evidence="2">Catalyzes the formation of N(7)-methylguanine at position 46 (m7G46) in tRNA.</text>
</comment>
<comment type="catalytic activity">
    <reaction evidence="2">
        <text>guanosine(46) in tRNA + S-adenosyl-L-methionine = N(7)-methylguanosine(46) in tRNA + S-adenosyl-L-homocysteine</text>
        <dbReference type="Rhea" id="RHEA:42708"/>
        <dbReference type="Rhea" id="RHEA-COMP:10188"/>
        <dbReference type="Rhea" id="RHEA-COMP:10189"/>
        <dbReference type="ChEBI" id="CHEBI:57856"/>
        <dbReference type="ChEBI" id="CHEBI:59789"/>
        <dbReference type="ChEBI" id="CHEBI:74269"/>
        <dbReference type="ChEBI" id="CHEBI:74480"/>
        <dbReference type="EC" id="2.1.1.33"/>
    </reaction>
</comment>
<comment type="pathway">
    <text evidence="2">tRNA modification; N(7)-methylguanine-tRNA biosynthesis.</text>
</comment>
<comment type="similarity">
    <text evidence="2">Belongs to the class I-like SAM-binding methyltransferase superfamily. TrmB family.</text>
</comment>
<name>TRMB_BRUA4</name>
<reference key="1">
    <citation type="journal article" date="2011" name="J. Bacteriol.">
        <title>Genome of Ochrobactrum anthropi ATCC 49188 T, a versatile opportunistic pathogen and symbiont of several eukaryotic hosts.</title>
        <authorList>
            <person name="Chain P.S."/>
            <person name="Lang D.M."/>
            <person name="Comerci D.J."/>
            <person name="Malfatti S.A."/>
            <person name="Vergez L.M."/>
            <person name="Shin M."/>
            <person name="Ugalde R.A."/>
            <person name="Garcia E."/>
            <person name="Tolmasky M.E."/>
        </authorList>
    </citation>
    <scope>NUCLEOTIDE SEQUENCE [LARGE SCALE GENOMIC DNA]</scope>
    <source>
        <strain>ATCC 49188 / DSM 6882 / CCUG 24695 / JCM 21032 / LMG 3331 / NBRC 15819 / NCTC 12168 / Alc 37</strain>
    </source>
</reference>
<sequence>MTEESHPLRGAGNFFGRRHGKPLRSHQKNLFEDLLPRLKINVENPAPQDLRTLFEAKVDAVRLEIGFGGGEHLHHETGRYPQTGFIGVEPFINGMAKMLAALDGEPRSNLRLYDEDATAVLDWLPDASLSGIDLFYPDPWHKRRHWKRRFVSDANLDRFARVLKPGAKFRFASDIEHYVNWTLQHCRRHPAFDWQAEGPSDWNHAYEGWPGTRYEAKAFREGRRAAYLTFIRR</sequence>
<proteinExistence type="inferred from homology"/>
<feature type="chain" id="PRO_1000064401" description="tRNA (guanine-N(7)-)-methyltransferase">
    <location>
        <begin position="1"/>
        <end position="233"/>
    </location>
</feature>
<feature type="region of interest" description="Disordered" evidence="3">
    <location>
        <begin position="1"/>
        <end position="21"/>
    </location>
</feature>
<feature type="active site" evidence="1">
    <location>
        <position position="138"/>
    </location>
</feature>
<feature type="binding site" evidence="2">
    <location>
        <position position="64"/>
    </location>
    <ligand>
        <name>S-adenosyl-L-methionine</name>
        <dbReference type="ChEBI" id="CHEBI:59789"/>
    </ligand>
</feature>
<feature type="binding site" evidence="2">
    <location>
        <position position="89"/>
    </location>
    <ligand>
        <name>S-adenosyl-L-methionine</name>
        <dbReference type="ChEBI" id="CHEBI:59789"/>
    </ligand>
</feature>
<feature type="binding site" evidence="2">
    <location>
        <position position="116"/>
    </location>
    <ligand>
        <name>S-adenosyl-L-methionine</name>
        <dbReference type="ChEBI" id="CHEBI:59789"/>
    </ligand>
</feature>
<feature type="binding site" evidence="2">
    <location>
        <position position="138"/>
    </location>
    <ligand>
        <name>S-adenosyl-L-methionine</name>
        <dbReference type="ChEBI" id="CHEBI:59789"/>
    </ligand>
</feature>
<feature type="binding site" evidence="2">
    <location>
        <position position="142"/>
    </location>
    <ligand>
        <name>substrate</name>
    </ligand>
</feature>
<feature type="binding site" evidence="2">
    <location>
        <position position="174"/>
    </location>
    <ligand>
        <name>substrate</name>
    </ligand>
</feature>
<feature type="binding site" evidence="2">
    <location>
        <begin position="212"/>
        <end position="215"/>
    </location>
    <ligand>
        <name>substrate</name>
    </ligand>
</feature>
<dbReference type="EC" id="2.1.1.33" evidence="2"/>
<dbReference type="EMBL" id="CP000758">
    <property type="protein sequence ID" value="ABS13473.1"/>
    <property type="molecule type" value="Genomic_DNA"/>
</dbReference>
<dbReference type="RefSeq" id="WP_012090995.1">
    <property type="nucleotide sequence ID" value="NC_009667.1"/>
</dbReference>
<dbReference type="SMR" id="A6WWW9"/>
<dbReference type="STRING" id="439375.Oant_0751"/>
<dbReference type="KEGG" id="oan:Oant_0751"/>
<dbReference type="PATRIC" id="fig|439375.7.peg.793"/>
<dbReference type="eggNOG" id="COG0220">
    <property type="taxonomic scope" value="Bacteria"/>
</dbReference>
<dbReference type="HOGENOM" id="CLU_050910_0_3_5"/>
<dbReference type="PhylomeDB" id="A6WWW9"/>
<dbReference type="UniPathway" id="UPA00989"/>
<dbReference type="Proteomes" id="UP000002301">
    <property type="component" value="Chromosome 1"/>
</dbReference>
<dbReference type="GO" id="GO:0043527">
    <property type="term" value="C:tRNA methyltransferase complex"/>
    <property type="evidence" value="ECO:0007669"/>
    <property type="project" value="TreeGrafter"/>
</dbReference>
<dbReference type="GO" id="GO:0008176">
    <property type="term" value="F:tRNA (guanine(46)-N7)-methyltransferase activity"/>
    <property type="evidence" value="ECO:0007669"/>
    <property type="project" value="UniProtKB-UniRule"/>
</dbReference>
<dbReference type="Gene3D" id="3.40.50.150">
    <property type="entry name" value="Vaccinia Virus protein VP39"/>
    <property type="match status" value="1"/>
</dbReference>
<dbReference type="HAMAP" id="MF_01057">
    <property type="entry name" value="tRNA_methyltr_TrmB"/>
    <property type="match status" value="1"/>
</dbReference>
<dbReference type="InterPro" id="IPR029063">
    <property type="entry name" value="SAM-dependent_MTases_sf"/>
</dbReference>
<dbReference type="InterPro" id="IPR003358">
    <property type="entry name" value="tRNA_(Gua-N-7)_MeTrfase_Trmb"/>
</dbReference>
<dbReference type="InterPro" id="IPR055361">
    <property type="entry name" value="tRNA_methyltr_TrmB_bact"/>
</dbReference>
<dbReference type="PANTHER" id="PTHR23417">
    <property type="entry name" value="3-DEOXY-D-MANNO-OCTULOSONIC-ACID TRANSFERASE/TRNA GUANINE-N 7 - -METHYLTRANSFERASE"/>
    <property type="match status" value="1"/>
</dbReference>
<dbReference type="PANTHER" id="PTHR23417:SF14">
    <property type="entry name" value="PENTACOTRIPEPTIDE-REPEAT REGION OF PRORP DOMAIN-CONTAINING PROTEIN"/>
    <property type="match status" value="1"/>
</dbReference>
<dbReference type="Pfam" id="PF02390">
    <property type="entry name" value="Methyltransf_4"/>
    <property type="match status" value="1"/>
</dbReference>
<dbReference type="SUPFAM" id="SSF53335">
    <property type="entry name" value="S-adenosyl-L-methionine-dependent methyltransferases"/>
    <property type="match status" value="1"/>
</dbReference>
<dbReference type="PROSITE" id="PS51625">
    <property type="entry name" value="SAM_MT_TRMB"/>
    <property type="match status" value="1"/>
</dbReference>
<gene>
    <name evidence="2" type="primary">trmB</name>
    <name type="ordered locus">Oant_0751</name>
</gene>
<evidence type="ECO:0000250" key="1"/>
<evidence type="ECO:0000255" key="2">
    <source>
        <dbReference type="HAMAP-Rule" id="MF_01057"/>
    </source>
</evidence>
<evidence type="ECO:0000256" key="3">
    <source>
        <dbReference type="SAM" id="MobiDB-lite"/>
    </source>
</evidence>
<keyword id="KW-0489">Methyltransferase</keyword>
<keyword id="KW-1185">Reference proteome</keyword>
<keyword id="KW-0949">S-adenosyl-L-methionine</keyword>
<keyword id="KW-0808">Transferase</keyword>
<keyword id="KW-0819">tRNA processing</keyword>
<organism>
    <name type="scientific">Brucella anthropi (strain ATCC 49188 / DSM 6882 / CCUG 24695 / JCM 21032 / LMG 3331 / NBRC 15819 / NCTC 12168 / Alc 37)</name>
    <name type="common">Ochrobactrum anthropi</name>
    <dbReference type="NCBI Taxonomy" id="439375"/>
    <lineage>
        <taxon>Bacteria</taxon>
        <taxon>Pseudomonadati</taxon>
        <taxon>Pseudomonadota</taxon>
        <taxon>Alphaproteobacteria</taxon>
        <taxon>Hyphomicrobiales</taxon>
        <taxon>Brucellaceae</taxon>
        <taxon>Brucella/Ochrobactrum group</taxon>
        <taxon>Brucella</taxon>
    </lineage>
</organism>